<organism>
    <name type="scientific">Cupriavidus necator (strain ATCC 17699 / DSM 428 / KCTC 22496 / NCIMB 10442 / H16 / Stanier 337)</name>
    <name type="common">Ralstonia eutropha</name>
    <dbReference type="NCBI Taxonomy" id="381666"/>
    <lineage>
        <taxon>Bacteria</taxon>
        <taxon>Pseudomonadati</taxon>
        <taxon>Pseudomonadota</taxon>
        <taxon>Betaproteobacteria</taxon>
        <taxon>Burkholderiales</taxon>
        <taxon>Burkholderiaceae</taxon>
        <taxon>Cupriavidus</taxon>
    </lineage>
</organism>
<name>PXPA_CUPNH</name>
<reference key="1">
    <citation type="journal article" date="2006" name="Nat. Biotechnol.">
        <title>Genome sequence of the bioplastic-producing 'Knallgas' bacterium Ralstonia eutropha H16.</title>
        <authorList>
            <person name="Pohlmann A."/>
            <person name="Fricke W.F."/>
            <person name="Reinecke F."/>
            <person name="Kusian B."/>
            <person name="Liesegang H."/>
            <person name="Cramm R."/>
            <person name="Eitinger T."/>
            <person name="Ewering C."/>
            <person name="Poetter M."/>
            <person name="Schwartz E."/>
            <person name="Strittmatter A."/>
            <person name="Voss I."/>
            <person name="Gottschalk G."/>
            <person name="Steinbuechel A."/>
            <person name="Friedrich B."/>
            <person name="Bowien B."/>
        </authorList>
    </citation>
    <scope>NUCLEOTIDE SEQUENCE [LARGE SCALE GENOMIC DNA]</scope>
    <source>
        <strain>ATCC 17699 / DSM 428 / KCTC 22496 / NCIMB 10442 / H16 / Stanier 337</strain>
    </source>
</reference>
<protein>
    <recommendedName>
        <fullName evidence="1">5-oxoprolinase subunit A</fullName>
        <shortName evidence="1">5-OPase subunit A</shortName>
        <ecNumber evidence="1">3.5.2.9</ecNumber>
    </recommendedName>
    <alternativeName>
        <fullName evidence="1">5-oxoprolinase (ATP-hydrolyzing) subunit A</fullName>
    </alternativeName>
</protein>
<evidence type="ECO:0000255" key="1">
    <source>
        <dbReference type="HAMAP-Rule" id="MF_00691"/>
    </source>
</evidence>
<gene>
    <name evidence="1" type="primary">pxpA</name>
    <name type="ordered locus">H16_A0126</name>
</gene>
<keyword id="KW-0067">ATP-binding</keyword>
<keyword id="KW-0378">Hydrolase</keyword>
<keyword id="KW-0547">Nucleotide-binding</keyword>
<keyword id="KW-1185">Reference proteome</keyword>
<feature type="chain" id="PRO_1000045215" description="5-oxoprolinase subunit A">
    <location>
        <begin position="1"/>
        <end position="246"/>
    </location>
</feature>
<proteinExistence type="inferred from homology"/>
<accession>Q0KFE3</accession>
<sequence>MQIDLNADLGEGCANDEALLALISSANIACGWHAGDAATMVQTVKWALERGVAIGAHPSYPDRENFGRTEMQRDPEHVYADVLYQIGALDAIVRAQGGELHHVKPHGALYNQAVRDPALARAIVRAVRDFDADLVFFGLAGSQMIDIAREAGLRVKQEVFADRGYNPDGTLVKRGSPGALHEDEEVALNQTLTMVREKRVRAIDGTWVPIQAETVCLHGDGAHALAFARRIRERLGAEGIAVRAGD</sequence>
<comment type="function">
    <text evidence="1">Catalyzes the cleavage of 5-oxoproline to form L-glutamate coupled to the hydrolysis of ATP to ADP and inorganic phosphate.</text>
</comment>
<comment type="catalytic activity">
    <reaction evidence="1">
        <text>5-oxo-L-proline + ATP + 2 H2O = L-glutamate + ADP + phosphate + H(+)</text>
        <dbReference type="Rhea" id="RHEA:10348"/>
        <dbReference type="ChEBI" id="CHEBI:15377"/>
        <dbReference type="ChEBI" id="CHEBI:15378"/>
        <dbReference type="ChEBI" id="CHEBI:29985"/>
        <dbReference type="ChEBI" id="CHEBI:30616"/>
        <dbReference type="ChEBI" id="CHEBI:43474"/>
        <dbReference type="ChEBI" id="CHEBI:58402"/>
        <dbReference type="ChEBI" id="CHEBI:456216"/>
        <dbReference type="EC" id="3.5.2.9"/>
    </reaction>
</comment>
<comment type="subunit">
    <text evidence="1">Forms a complex composed of PxpA, PxpB and PxpC.</text>
</comment>
<comment type="similarity">
    <text evidence="1">Belongs to the LamB/PxpA family.</text>
</comment>
<dbReference type="EC" id="3.5.2.9" evidence="1"/>
<dbReference type="EMBL" id="AM260479">
    <property type="protein sequence ID" value="CAJ91278.1"/>
    <property type="molecule type" value="Genomic_DNA"/>
</dbReference>
<dbReference type="RefSeq" id="WP_011614362.1">
    <property type="nucleotide sequence ID" value="NC_008313.1"/>
</dbReference>
<dbReference type="SMR" id="Q0KFE3"/>
<dbReference type="STRING" id="381666.H16_A0126"/>
<dbReference type="KEGG" id="reh:H16_A0126"/>
<dbReference type="PATRIC" id="fig|381666.6.peg.477"/>
<dbReference type="eggNOG" id="COG1540">
    <property type="taxonomic scope" value="Bacteria"/>
</dbReference>
<dbReference type="HOGENOM" id="CLU_069535_0_0_4"/>
<dbReference type="OrthoDB" id="9773478at2"/>
<dbReference type="Proteomes" id="UP000008210">
    <property type="component" value="Chromosome 1"/>
</dbReference>
<dbReference type="GO" id="GO:0017168">
    <property type="term" value="F:5-oxoprolinase (ATP-hydrolyzing) activity"/>
    <property type="evidence" value="ECO:0007669"/>
    <property type="project" value="UniProtKB-UniRule"/>
</dbReference>
<dbReference type="GO" id="GO:0005524">
    <property type="term" value="F:ATP binding"/>
    <property type="evidence" value="ECO:0007669"/>
    <property type="project" value="UniProtKB-UniRule"/>
</dbReference>
<dbReference type="GO" id="GO:0005975">
    <property type="term" value="P:carbohydrate metabolic process"/>
    <property type="evidence" value="ECO:0007669"/>
    <property type="project" value="InterPro"/>
</dbReference>
<dbReference type="CDD" id="cd10800">
    <property type="entry name" value="LamB_YcsF_YbgL_like"/>
    <property type="match status" value="1"/>
</dbReference>
<dbReference type="Gene3D" id="3.20.20.370">
    <property type="entry name" value="Glycoside hydrolase/deacetylase"/>
    <property type="match status" value="1"/>
</dbReference>
<dbReference type="HAMAP" id="MF_00691">
    <property type="entry name" value="PxpA"/>
    <property type="match status" value="1"/>
</dbReference>
<dbReference type="InterPro" id="IPR011330">
    <property type="entry name" value="Glyco_hydro/deAcase_b/a-brl"/>
</dbReference>
<dbReference type="InterPro" id="IPR005501">
    <property type="entry name" value="LamB/YcsF/PxpA-like"/>
</dbReference>
<dbReference type="NCBIfam" id="NF003812">
    <property type="entry name" value="PRK05406.1-1"/>
    <property type="match status" value="1"/>
</dbReference>
<dbReference type="NCBIfam" id="NF003814">
    <property type="entry name" value="PRK05406.1-3"/>
    <property type="match status" value="1"/>
</dbReference>
<dbReference type="NCBIfam" id="NF003815">
    <property type="entry name" value="PRK05406.1-4"/>
    <property type="match status" value="1"/>
</dbReference>
<dbReference type="NCBIfam" id="NF003816">
    <property type="entry name" value="PRK05406.1-5"/>
    <property type="match status" value="1"/>
</dbReference>
<dbReference type="PANTHER" id="PTHR30292:SF0">
    <property type="entry name" value="5-OXOPROLINASE SUBUNIT A"/>
    <property type="match status" value="1"/>
</dbReference>
<dbReference type="PANTHER" id="PTHR30292">
    <property type="entry name" value="UNCHARACTERIZED PROTEIN YBGL-RELATED"/>
    <property type="match status" value="1"/>
</dbReference>
<dbReference type="Pfam" id="PF03746">
    <property type="entry name" value="LamB_YcsF"/>
    <property type="match status" value="1"/>
</dbReference>
<dbReference type="SUPFAM" id="SSF88713">
    <property type="entry name" value="Glycoside hydrolase/deacetylase"/>
    <property type="match status" value="1"/>
</dbReference>